<dbReference type="EC" id="1.3.3.3" evidence="1"/>
<dbReference type="EMBL" id="CP000822">
    <property type="protein sequence ID" value="ABV11513.1"/>
    <property type="molecule type" value="Genomic_DNA"/>
</dbReference>
<dbReference type="RefSeq" id="WP_012131342.1">
    <property type="nucleotide sequence ID" value="NC_009792.1"/>
</dbReference>
<dbReference type="SMR" id="A8ADF0"/>
<dbReference type="STRING" id="290338.CKO_00350"/>
<dbReference type="GeneID" id="45134618"/>
<dbReference type="KEGG" id="cko:CKO_00350"/>
<dbReference type="HOGENOM" id="CLU_026169_0_1_6"/>
<dbReference type="OrthoDB" id="9777553at2"/>
<dbReference type="UniPathway" id="UPA00251">
    <property type="reaction ID" value="UER00322"/>
</dbReference>
<dbReference type="Proteomes" id="UP000008148">
    <property type="component" value="Chromosome"/>
</dbReference>
<dbReference type="GO" id="GO:0005737">
    <property type="term" value="C:cytoplasm"/>
    <property type="evidence" value="ECO:0007669"/>
    <property type="project" value="UniProtKB-SubCell"/>
</dbReference>
<dbReference type="GO" id="GO:0004109">
    <property type="term" value="F:coproporphyrinogen oxidase activity"/>
    <property type="evidence" value="ECO:0007669"/>
    <property type="project" value="UniProtKB-UniRule"/>
</dbReference>
<dbReference type="GO" id="GO:0046872">
    <property type="term" value="F:metal ion binding"/>
    <property type="evidence" value="ECO:0007669"/>
    <property type="project" value="UniProtKB-KW"/>
</dbReference>
<dbReference type="GO" id="GO:0042803">
    <property type="term" value="F:protein homodimerization activity"/>
    <property type="evidence" value="ECO:0000250"/>
    <property type="project" value="UniProtKB"/>
</dbReference>
<dbReference type="GO" id="GO:0006782">
    <property type="term" value="P:protoporphyrinogen IX biosynthetic process"/>
    <property type="evidence" value="ECO:0007669"/>
    <property type="project" value="UniProtKB-UniRule"/>
</dbReference>
<dbReference type="FunFam" id="3.40.1500.10:FF:000001">
    <property type="entry name" value="Oxygen-dependent coproporphyrinogen-III oxidase"/>
    <property type="match status" value="1"/>
</dbReference>
<dbReference type="Gene3D" id="3.40.1500.10">
    <property type="entry name" value="Coproporphyrinogen III oxidase, aerobic"/>
    <property type="match status" value="1"/>
</dbReference>
<dbReference type="HAMAP" id="MF_00333">
    <property type="entry name" value="Coprogen_oxidas"/>
    <property type="match status" value="1"/>
</dbReference>
<dbReference type="InterPro" id="IPR001260">
    <property type="entry name" value="Coprogen_oxidase_aer"/>
</dbReference>
<dbReference type="InterPro" id="IPR036406">
    <property type="entry name" value="Coprogen_oxidase_aer_sf"/>
</dbReference>
<dbReference type="InterPro" id="IPR018375">
    <property type="entry name" value="Coprogen_oxidase_CS"/>
</dbReference>
<dbReference type="NCBIfam" id="NF003727">
    <property type="entry name" value="PRK05330.1"/>
    <property type="match status" value="1"/>
</dbReference>
<dbReference type="PANTHER" id="PTHR10755">
    <property type="entry name" value="COPROPORPHYRINOGEN III OXIDASE, MITOCHONDRIAL"/>
    <property type="match status" value="1"/>
</dbReference>
<dbReference type="PANTHER" id="PTHR10755:SF0">
    <property type="entry name" value="OXYGEN-DEPENDENT COPROPORPHYRINOGEN-III OXIDASE, MITOCHONDRIAL"/>
    <property type="match status" value="1"/>
</dbReference>
<dbReference type="Pfam" id="PF01218">
    <property type="entry name" value="Coprogen_oxidas"/>
    <property type="match status" value="1"/>
</dbReference>
<dbReference type="PIRSF" id="PIRSF000166">
    <property type="entry name" value="Coproporphyri_ox"/>
    <property type="match status" value="1"/>
</dbReference>
<dbReference type="PRINTS" id="PR00073">
    <property type="entry name" value="COPRGNOXDASE"/>
</dbReference>
<dbReference type="SUPFAM" id="SSF102886">
    <property type="entry name" value="Coproporphyrinogen III oxidase"/>
    <property type="match status" value="1"/>
</dbReference>
<dbReference type="PROSITE" id="PS01021">
    <property type="entry name" value="COPROGEN_OXIDASE"/>
    <property type="match status" value="1"/>
</dbReference>
<feature type="chain" id="PRO_1000019466" description="Oxygen-dependent coproporphyrinogen-III oxidase">
    <location>
        <begin position="1"/>
        <end position="299"/>
    </location>
</feature>
<feature type="region of interest" description="Important for dimerization" evidence="1">
    <location>
        <begin position="240"/>
        <end position="275"/>
    </location>
</feature>
<feature type="active site" description="Proton donor" evidence="1">
    <location>
        <position position="106"/>
    </location>
</feature>
<feature type="binding site" evidence="1">
    <location>
        <position position="92"/>
    </location>
    <ligand>
        <name>substrate</name>
    </ligand>
</feature>
<feature type="binding site" evidence="1">
    <location>
        <position position="96"/>
    </location>
    <ligand>
        <name>a divalent metal cation</name>
        <dbReference type="ChEBI" id="CHEBI:60240"/>
    </ligand>
</feature>
<feature type="binding site" evidence="1">
    <location>
        <position position="106"/>
    </location>
    <ligand>
        <name>a divalent metal cation</name>
        <dbReference type="ChEBI" id="CHEBI:60240"/>
    </ligand>
</feature>
<feature type="binding site" evidence="1">
    <location>
        <begin position="108"/>
        <end position="110"/>
    </location>
    <ligand>
        <name>substrate</name>
    </ligand>
</feature>
<feature type="binding site" evidence="1">
    <location>
        <position position="145"/>
    </location>
    <ligand>
        <name>a divalent metal cation</name>
        <dbReference type="ChEBI" id="CHEBI:60240"/>
    </ligand>
</feature>
<feature type="binding site" evidence="1">
    <location>
        <position position="175"/>
    </location>
    <ligand>
        <name>a divalent metal cation</name>
        <dbReference type="ChEBI" id="CHEBI:60240"/>
    </ligand>
</feature>
<feature type="binding site" evidence="1">
    <location>
        <begin position="258"/>
        <end position="260"/>
    </location>
    <ligand>
        <name>substrate</name>
    </ligand>
</feature>
<feature type="site" description="Important for dimerization" evidence="1">
    <location>
        <position position="175"/>
    </location>
</feature>
<proteinExistence type="inferred from homology"/>
<protein>
    <recommendedName>
        <fullName evidence="1">Oxygen-dependent coproporphyrinogen-III oxidase</fullName>
        <shortName evidence="1">CPO</shortName>
        <shortName evidence="1">Coprogen oxidase</shortName>
        <shortName evidence="1">Coproporphyrinogenase</shortName>
        <ecNumber evidence="1">1.3.3.3</ecNumber>
    </recommendedName>
</protein>
<keyword id="KW-0963">Cytoplasm</keyword>
<keyword id="KW-0350">Heme biosynthesis</keyword>
<keyword id="KW-0479">Metal-binding</keyword>
<keyword id="KW-0560">Oxidoreductase</keyword>
<keyword id="KW-0627">Porphyrin biosynthesis</keyword>
<keyword id="KW-1185">Reference proteome</keyword>
<comment type="function">
    <text evidence="1">Involved in the heme biosynthesis. Catalyzes the aerobic oxidative decarboxylation of propionate groups of rings A and B of coproporphyrinogen-III to yield the vinyl groups in protoporphyrinogen-IX.</text>
</comment>
<comment type="catalytic activity">
    <reaction evidence="1">
        <text>coproporphyrinogen III + O2 + 2 H(+) = protoporphyrinogen IX + 2 CO2 + 2 H2O</text>
        <dbReference type="Rhea" id="RHEA:18257"/>
        <dbReference type="ChEBI" id="CHEBI:15377"/>
        <dbReference type="ChEBI" id="CHEBI:15378"/>
        <dbReference type="ChEBI" id="CHEBI:15379"/>
        <dbReference type="ChEBI" id="CHEBI:16526"/>
        <dbReference type="ChEBI" id="CHEBI:57307"/>
        <dbReference type="ChEBI" id="CHEBI:57309"/>
        <dbReference type="EC" id="1.3.3.3"/>
    </reaction>
</comment>
<comment type="cofactor">
    <cofactor evidence="1">
        <name>a divalent metal cation</name>
        <dbReference type="ChEBI" id="CHEBI:60240"/>
    </cofactor>
</comment>
<comment type="pathway">
    <text evidence="1">Porphyrin-containing compound metabolism; protoporphyrin-IX biosynthesis; protoporphyrinogen-IX from coproporphyrinogen-III (O2 route): step 1/1.</text>
</comment>
<comment type="subunit">
    <text evidence="1">Homodimer.</text>
</comment>
<comment type="subcellular location">
    <subcellularLocation>
        <location evidence="1">Cytoplasm</location>
    </subcellularLocation>
</comment>
<comment type="similarity">
    <text evidence="1">Belongs to the aerobic coproporphyrinogen-III oxidase family.</text>
</comment>
<sequence>MKPDAQRVKQFLLSLQDDICQQLAAVDGADFVEDSWQRDAGGGGRSRVLRNGGVFEQAGVNFSHVHGDAMPASATAHRPELAGRSFEAMGVSLVVHPLNPYIPTSHANVRFFIAEKPGAEPVWWFGGGFDLTPYYAFEEDAIHWHRTARDLCQPYGEDVYPRYKKWCDDYFFLKHRDEQRGIGGLFFDDLNTPDFDSCFRFMQAVGKGYTDAFLPIVERRKAMVWGERERHFQLYRRGRYVEFNLVWDRGTLFGLQTGGRTESILMSMPPLVRWEYDWQPEEGSPEAALSEFIKVRDWV</sequence>
<name>HEM6_CITK8</name>
<organism>
    <name type="scientific">Citrobacter koseri (strain ATCC BAA-895 / CDC 4225-83 / SGSC4696)</name>
    <dbReference type="NCBI Taxonomy" id="290338"/>
    <lineage>
        <taxon>Bacteria</taxon>
        <taxon>Pseudomonadati</taxon>
        <taxon>Pseudomonadota</taxon>
        <taxon>Gammaproteobacteria</taxon>
        <taxon>Enterobacterales</taxon>
        <taxon>Enterobacteriaceae</taxon>
        <taxon>Citrobacter</taxon>
    </lineage>
</organism>
<accession>A8ADF0</accession>
<gene>
    <name evidence="1" type="primary">hemF</name>
    <name type="ordered locus">CKO_00350</name>
</gene>
<evidence type="ECO:0000255" key="1">
    <source>
        <dbReference type="HAMAP-Rule" id="MF_00333"/>
    </source>
</evidence>
<reference key="1">
    <citation type="submission" date="2007-08" db="EMBL/GenBank/DDBJ databases">
        <authorList>
            <consortium name="The Citrobacter koseri Genome Sequencing Project"/>
            <person name="McClelland M."/>
            <person name="Sanderson E.K."/>
            <person name="Porwollik S."/>
            <person name="Spieth J."/>
            <person name="Clifton W.S."/>
            <person name="Latreille P."/>
            <person name="Courtney L."/>
            <person name="Wang C."/>
            <person name="Pepin K."/>
            <person name="Bhonagiri V."/>
            <person name="Nash W."/>
            <person name="Johnson M."/>
            <person name="Thiruvilangam P."/>
            <person name="Wilson R."/>
        </authorList>
    </citation>
    <scope>NUCLEOTIDE SEQUENCE [LARGE SCALE GENOMIC DNA]</scope>
    <source>
        <strain>ATCC BAA-895 / CDC 4225-83 / SGSC4696</strain>
    </source>
</reference>